<gene>
    <name evidence="1" type="primary">kdsB</name>
    <name type="ordered locus">SbBS512_E2406</name>
</gene>
<feature type="chain" id="PRO_1000091907" description="3-deoxy-manno-octulosonate cytidylyltransferase">
    <location>
        <begin position="1"/>
        <end position="248"/>
    </location>
</feature>
<reference key="1">
    <citation type="submission" date="2008-05" db="EMBL/GenBank/DDBJ databases">
        <title>Complete sequence of Shigella boydii serotype 18 strain BS512.</title>
        <authorList>
            <person name="Rasko D.A."/>
            <person name="Rosovitz M."/>
            <person name="Maurelli A.T."/>
            <person name="Myers G."/>
            <person name="Seshadri R."/>
            <person name="Cer R."/>
            <person name="Jiang L."/>
            <person name="Ravel J."/>
            <person name="Sebastian Y."/>
        </authorList>
    </citation>
    <scope>NUCLEOTIDE SEQUENCE [LARGE SCALE GENOMIC DNA]</scope>
    <source>
        <strain>CDC 3083-94 / BS512</strain>
    </source>
</reference>
<keyword id="KW-0963">Cytoplasm</keyword>
<keyword id="KW-0448">Lipopolysaccharide biosynthesis</keyword>
<keyword id="KW-0548">Nucleotidyltransferase</keyword>
<keyword id="KW-1185">Reference proteome</keyword>
<keyword id="KW-0808">Transferase</keyword>
<name>KDSB_SHIB3</name>
<evidence type="ECO:0000255" key="1">
    <source>
        <dbReference type="HAMAP-Rule" id="MF_00057"/>
    </source>
</evidence>
<sequence>MSFVVIIPARYASTRLPGKPLVDINGKPMIVHVLERARESGAERIIVATDHEDVARAVEAAGGEVCMTRADHQSGTERLAEVVEKCAFSDDTVIVNVQGDEPMIPATIIRQVADNLAQRQVGMATLAVPIHNAEEAFNPNAVKVVLDAEGYALYFSRATIPWDRDRFAEGLETVGDNFLRHLGIYGYRAGFIRRYVNWQASPLEHIEMLEQLRVLWYGEKIHVAVAQEVPGTGVDTPEDLERVRAEMR</sequence>
<protein>
    <recommendedName>
        <fullName evidence="1">3-deoxy-manno-octulosonate cytidylyltransferase</fullName>
        <ecNumber evidence="1">2.7.7.38</ecNumber>
    </recommendedName>
    <alternativeName>
        <fullName evidence="1">CMP-2-keto-3-deoxyoctulosonic acid synthase</fullName>
        <shortName evidence="1">CKS</shortName>
        <shortName evidence="1">CMP-KDO synthase</shortName>
    </alternativeName>
</protein>
<dbReference type="EC" id="2.7.7.38" evidence="1"/>
<dbReference type="EMBL" id="CP001063">
    <property type="protein sequence ID" value="ACD10452.1"/>
    <property type="molecule type" value="Genomic_DNA"/>
</dbReference>
<dbReference type="RefSeq" id="WP_000011601.1">
    <property type="nucleotide sequence ID" value="NC_010658.1"/>
</dbReference>
<dbReference type="SMR" id="B2TUG1"/>
<dbReference type="STRING" id="344609.SbBS512_E2406"/>
<dbReference type="GeneID" id="93776497"/>
<dbReference type="KEGG" id="sbc:SbBS512_E2406"/>
<dbReference type="HOGENOM" id="CLU_065038_1_0_6"/>
<dbReference type="UniPathway" id="UPA00030"/>
<dbReference type="UniPathway" id="UPA00358">
    <property type="reaction ID" value="UER00476"/>
</dbReference>
<dbReference type="Proteomes" id="UP000001030">
    <property type="component" value="Chromosome"/>
</dbReference>
<dbReference type="GO" id="GO:0005829">
    <property type="term" value="C:cytosol"/>
    <property type="evidence" value="ECO:0007669"/>
    <property type="project" value="TreeGrafter"/>
</dbReference>
<dbReference type="GO" id="GO:0008690">
    <property type="term" value="F:3-deoxy-manno-octulosonate cytidylyltransferase activity"/>
    <property type="evidence" value="ECO:0007669"/>
    <property type="project" value="UniProtKB-UniRule"/>
</dbReference>
<dbReference type="GO" id="GO:0033468">
    <property type="term" value="P:CMP-keto-3-deoxy-D-manno-octulosonic acid biosynthetic process"/>
    <property type="evidence" value="ECO:0007669"/>
    <property type="project" value="UniProtKB-UniRule"/>
</dbReference>
<dbReference type="GO" id="GO:0009103">
    <property type="term" value="P:lipopolysaccharide biosynthetic process"/>
    <property type="evidence" value="ECO:0007669"/>
    <property type="project" value="UniProtKB-UniRule"/>
</dbReference>
<dbReference type="CDD" id="cd02517">
    <property type="entry name" value="CMP-KDO-Synthetase"/>
    <property type="match status" value="1"/>
</dbReference>
<dbReference type="FunFam" id="3.90.550.10:FF:000011">
    <property type="entry name" value="3-deoxy-manno-octulosonate cytidylyltransferase"/>
    <property type="match status" value="1"/>
</dbReference>
<dbReference type="Gene3D" id="3.90.550.10">
    <property type="entry name" value="Spore Coat Polysaccharide Biosynthesis Protein SpsA, Chain A"/>
    <property type="match status" value="1"/>
</dbReference>
<dbReference type="HAMAP" id="MF_00057">
    <property type="entry name" value="KdsB"/>
    <property type="match status" value="1"/>
</dbReference>
<dbReference type="InterPro" id="IPR003329">
    <property type="entry name" value="Cytidylyl_trans"/>
</dbReference>
<dbReference type="InterPro" id="IPR004528">
    <property type="entry name" value="KdsB"/>
</dbReference>
<dbReference type="InterPro" id="IPR029044">
    <property type="entry name" value="Nucleotide-diphossugar_trans"/>
</dbReference>
<dbReference type="NCBIfam" id="TIGR00466">
    <property type="entry name" value="kdsB"/>
    <property type="match status" value="1"/>
</dbReference>
<dbReference type="NCBIfam" id="NF003950">
    <property type="entry name" value="PRK05450.1-3"/>
    <property type="match status" value="1"/>
</dbReference>
<dbReference type="NCBIfam" id="NF003952">
    <property type="entry name" value="PRK05450.1-5"/>
    <property type="match status" value="1"/>
</dbReference>
<dbReference type="NCBIfam" id="NF009905">
    <property type="entry name" value="PRK13368.1"/>
    <property type="match status" value="1"/>
</dbReference>
<dbReference type="PANTHER" id="PTHR42866">
    <property type="entry name" value="3-DEOXY-MANNO-OCTULOSONATE CYTIDYLYLTRANSFERASE"/>
    <property type="match status" value="1"/>
</dbReference>
<dbReference type="PANTHER" id="PTHR42866:SF2">
    <property type="entry name" value="3-DEOXY-MANNO-OCTULOSONATE CYTIDYLYLTRANSFERASE, MITOCHONDRIAL"/>
    <property type="match status" value="1"/>
</dbReference>
<dbReference type="Pfam" id="PF02348">
    <property type="entry name" value="CTP_transf_3"/>
    <property type="match status" value="1"/>
</dbReference>
<dbReference type="SUPFAM" id="SSF53448">
    <property type="entry name" value="Nucleotide-diphospho-sugar transferases"/>
    <property type="match status" value="1"/>
</dbReference>
<comment type="function">
    <text evidence="1">Activates KDO (a required 8-carbon sugar) for incorporation into bacterial lipopolysaccharide in Gram-negative bacteria.</text>
</comment>
<comment type="catalytic activity">
    <reaction evidence="1">
        <text>3-deoxy-alpha-D-manno-oct-2-ulosonate + CTP = CMP-3-deoxy-beta-D-manno-octulosonate + diphosphate</text>
        <dbReference type="Rhea" id="RHEA:23448"/>
        <dbReference type="ChEBI" id="CHEBI:33019"/>
        <dbReference type="ChEBI" id="CHEBI:37563"/>
        <dbReference type="ChEBI" id="CHEBI:85986"/>
        <dbReference type="ChEBI" id="CHEBI:85987"/>
        <dbReference type="EC" id="2.7.7.38"/>
    </reaction>
</comment>
<comment type="pathway">
    <text evidence="1">Nucleotide-sugar biosynthesis; CMP-3-deoxy-D-manno-octulosonate biosynthesis; CMP-3-deoxy-D-manno-octulosonate from 3-deoxy-D-manno-octulosonate and CTP: step 1/1.</text>
</comment>
<comment type="pathway">
    <text evidence="1">Bacterial outer membrane biogenesis; lipopolysaccharide biosynthesis.</text>
</comment>
<comment type="subcellular location">
    <subcellularLocation>
        <location evidence="1">Cytoplasm</location>
    </subcellularLocation>
</comment>
<comment type="similarity">
    <text evidence="1">Belongs to the KdsB family.</text>
</comment>
<proteinExistence type="inferred from homology"/>
<accession>B2TUG1</accession>
<organism>
    <name type="scientific">Shigella boydii serotype 18 (strain CDC 3083-94 / BS512)</name>
    <dbReference type="NCBI Taxonomy" id="344609"/>
    <lineage>
        <taxon>Bacteria</taxon>
        <taxon>Pseudomonadati</taxon>
        <taxon>Pseudomonadota</taxon>
        <taxon>Gammaproteobacteria</taxon>
        <taxon>Enterobacterales</taxon>
        <taxon>Enterobacteriaceae</taxon>
        <taxon>Shigella</taxon>
    </lineage>
</organism>